<protein>
    <recommendedName>
        <fullName evidence="1">ATP synthase epsilon chain</fullName>
    </recommendedName>
    <alternativeName>
        <fullName evidence="1">ATP synthase F1 sector epsilon subunit</fullName>
    </alternativeName>
    <alternativeName>
        <fullName evidence="1">F-ATPase epsilon subunit</fullName>
    </alternativeName>
</protein>
<name>ATPE_STRA5</name>
<gene>
    <name evidence="1" type="primary">atpC</name>
    <name type="ordered locus">SAG0864</name>
</gene>
<accession>Q8E071</accession>
<organism>
    <name type="scientific">Streptococcus agalactiae serotype V (strain ATCC BAA-611 / 2603 V/R)</name>
    <dbReference type="NCBI Taxonomy" id="208435"/>
    <lineage>
        <taxon>Bacteria</taxon>
        <taxon>Bacillati</taxon>
        <taxon>Bacillota</taxon>
        <taxon>Bacilli</taxon>
        <taxon>Lactobacillales</taxon>
        <taxon>Streptococcaceae</taxon>
        <taxon>Streptococcus</taxon>
    </lineage>
</organism>
<sequence>MAQLTVQVVTPDGIRYDHHASLITVRTPDGEMGILPGHINLIAPLNVHQMKINRSHQEGVDWVAVNGGIIEVNEDQVTIVADSAERARDIDLNRAERAKERAERALEKAQTTQNIDEMRRAEVALRRAINRISVGKK</sequence>
<proteinExistence type="inferred from homology"/>
<evidence type="ECO:0000255" key="1">
    <source>
        <dbReference type="HAMAP-Rule" id="MF_00530"/>
    </source>
</evidence>
<comment type="function">
    <text evidence="1">Produces ATP from ADP in the presence of a proton gradient across the membrane.</text>
</comment>
<comment type="subunit">
    <text>F-type ATPases have 2 components, CF(1) - the catalytic core - and CF(0) - the membrane proton channel. CF(1) has five subunits: alpha(3), beta(3), gamma(1), delta(1), epsilon(1). CF(0) has three main subunits: a, b and c.</text>
</comment>
<comment type="subcellular location">
    <subcellularLocation>
        <location evidence="1">Cell membrane</location>
        <topology evidence="1">Peripheral membrane protein</topology>
    </subcellularLocation>
</comment>
<comment type="similarity">
    <text evidence="1">Belongs to the ATPase epsilon chain family.</text>
</comment>
<keyword id="KW-0066">ATP synthesis</keyword>
<keyword id="KW-1003">Cell membrane</keyword>
<keyword id="KW-0139">CF(1)</keyword>
<keyword id="KW-0375">Hydrogen ion transport</keyword>
<keyword id="KW-0406">Ion transport</keyword>
<keyword id="KW-0472">Membrane</keyword>
<keyword id="KW-1185">Reference proteome</keyword>
<keyword id="KW-0813">Transport</keyword>
<reference key="1">
    <citation type="journal article" date="2002" name="Proc. Natl. Acad. Sci. U.S.A.">
        <title>Complete genome sequence and comparative genomic analysis of an emerging human pathogen, serotype V Streptococcus agalactiae.</title>
        <authorList>
            <person name="Tettelin H."/>
            <person name="Masignani V."/>
            <person name="Cieslewicz M.J."/>
            <person name="Eisen J.A."/>
            <person name="Peterson S.N."/>
            <person name="Wessels M.R."/>
            <person name="Paulsen I.T."/>
            <person name="Nelson K.E."/>
            <person name="Margarit I."/>
            <person name="Read T.D."/>
            <person name="Madoff L.C."/>
            <person name="Wolf A.M."/>
            <person name="Beanan M.J."/>
            <person name="Brinkac L.M."/>
            <person name="Daugherty S.C."/>
            <person name="DeBoy R.T."/>
            <person name="Durkin A.S."/>
            <person name="Kolonay J.F."/>
            <person name="Madupu R."/>
            <person name="Lewis M.R."/>
            <person name="Radune D."/>
            <person name="Fedorova N.B."/>
            <person name="Scanlan D."/>
            <person name="Khouri H.M."/>
            <person name="Mulligan S."/>
            <person name="Carty H.A."/>
            <person name="Cline R.T."/>
            <person name="Van Aken S.E."/>
            <person name="Gill J."/>
            <person name="Scarselli M."/>
            <person name="Mora M."/>
            <person name="Iacobini E.T."/>
            <person name="Brettoni C."/>
            <person name="Galli G."/>
            <person name="Mariani M."/>
            <person name="Vegni F."/>
            <person name="Maione D."/>
            <person name="Rinaudo D."/>
            <person name="Rappuoli R."/>
            <person name="Telford J.L."/>
            <person name="Kasper D.L."/>
            <person name="Grandi G."/>
            <person name="Fraser C.M."/>
        </authorList>
    </citation>
    <scope>NUCLEOTIDE SEQUENCE [LARGE SCALE GENOMIC DNA]</scope>
    <source>
        <strain>ATCC BAA-611 / 2603 V/R</strain>
    </source>
</reference>
<dbReference type="EMBL" id="AE009948">
    <property type="protein sequence ID" value="AAM99750.1"/>
    <property type="molecule type" value="Genomic_DNA"/>
</dbReference>
<dbReference type="RefSeq" id="NP_687878.1">
    <property type="nucleotide sequence ID" value="NC_004116.1"/>
</dbReference>
<dbReference type="RefSeq" id="WP_000068054.1">
    <property type="nucleotide sequence ID" value="NC_004116.1"/>
</dbReference>
<dbReference type="SMR" id="Q8E071"/>
<dbReference type="STRING" id="208435.SAG0864"/>
<dbReference type="KEGG" id="sag:SAG0864"/>
<dbReference type="PATRIC" id="fig|208435.3.peg.871"/>
<dbReference type="HOGENOM" id="CLU_084338_1_0_9"/>
<dbReference type="OrthoDB" id="9804110at2"/>
<dbReference type="Proteomes" id="UP000000821">
    <property type="component" value="Chromosome"/>
</dbReference>
<dbReference type="GO" id="GO:0005886">
    <property type="term" value="C:plasma membrane"/>
    <property type="evidence" value="ECO:0007669"/>
    <property type="project" value="UniProtKB-SubCell"/>
</dbReference>
<dbReference type="GO" id="GO:0045259">
    <property type="term" value="C:proton-transporting ATP synthase complex"/>
    <property type="evidence" value="ECO:0007669"/>
    <property type="project" value="UniProtKB-KW"/>
</dbReference>
<dbReference type="GO" id="GO:0005524">
    <property type="term" value="F:ATP binding"/>
    <property type="evidence" value="ECO:0007669"/>
    <property type="project" value="UniProtKB-UniRule"/>
</dbReference>
<dbReference type="GO" id="GO:0046933">
    <property type="term" value="F:proton-transporting ATP synthase activity, rotational mechanism"/>
    <property type="evidence" value="ECO:0007669"/>
    <property type="project" value="UniProtKB-UniRule"/>
</dbReference>
<dbReference type="CDD" id="cd12152">
    <property type="entry name" value="F1-ATPase_delta"/>
    <property type="match status" value="1"/>
</dbReference>
<dbReference type="Gene3D" id="1.20.5.440">
    <property type="entry name" value="ATP synthase delta/epsilon subunit, C-terminal domain"/>
    <property type="match status" value="1"/>
</dbReference>
<dbReference type="Gene3D" id="2.60.15.10">
    <property type="entry name" value="F0F1 ATP synthase delta/epsilon subunit, N-terminal"/>
    <property type="match status" value="1"/>
</dbReference>
<dbReference type="HAMAP" id="MF_00530">
    <property type="entry name" value="ATP_synth_epsil_bac"/>
    <property type="match status" value="1"/>
</dbReference>
<dbReference type="InterPro" id="IPR036794">
    <property type="entry name" value="ATP_F1_dsu/esu_C_sf"/>
</dbReference>
<dbReference type="InterPro" id="IPR001469">
    <property type="entry name" value="ATP_synth_F1_dsu/esu"/>
</dbReference>
<dbReference type="InterPro" id="IPR020546">
    <property type="entry name" value="ATP_synth_F1_dsu/esu_N"/>
</dbReference>
<dbReference type="InterPro" id="IPR020547">
    <property type="entry name" value="ATP_synth_F1_esu_C"/>
</dbReference>
<dbReference type="InterPro" id="IPR036771">
    <property type="entry name" value="ATPsynth_dsu/esu_N"/>
</dbReference>
<dbReference type="NCBIfam" id="TIGR01216">
    <property type="entry name" value="ATP_synt_epsi"/>
    <property type="match status" value="1"/>
</dbReference>
<dbReference type="NCBIfam" id="NF001846">
    <property type="entry name" value="PRK00571.1-3"/>
    <property type="match status" value="1"/>
</dbReference>
<dbReference type="PANTHER" id="PTHR13822">
    <property type="entry name" value="ATP SYNTHASE DELTA/EPSILON CHAIN"/>
    <property type="match status" value="1"/>
</dbReference>
<dbReference type="PANTHER" id="PTHR13822:SF10">
    <property type="entry name" value="ATP SYNTHASE EPSILON CHAIN, CHLOROPLASTIC"/>
    <property type="match status" value="1"/>
</dbReference>
<dbReference type="Pfam" id="PF00401">
    <property type="entry name" value="ATP-synt_DE"/>
    <property type="match status" value="1"/>
</dbReference>
<dbReference type="Pfam" id="PF02823">
    <property type="entry name" value="ATP-synt_DE_N"/>
    <property type="match status" value="1"/>
</dbReference>
<dbReference type="SUPFAM" id="SSF46604">
    <property type="entry name" value="Epsilon subunit of F1F0-ATP synthase C-terminal domain"/>
    <property type="match status" value="1"/>
</dbReference>
<dbReference type="SUPFAM" id="SSF51344">
    <property type="entry name" value="Epsilon subunit of F1F0-ATP synthase N-terminal domain"/>
    <property type="match status" value="1"/>
</dbReference>
<feature type="chain" id="PRO_0000188211" description="ATP synthase epsilon chain">
    <location>
        <begin position="1"/>
        <end position="137"/>
    </location>
</feature>